<evidence type="ECO:0000250" key="1">
    <source>
        <dbReference type="UniProtKB" id="Q5FVJ0"/>
    </source>
</evidence>
<evidence type="ECO:0000250" key="2">
    <source>
        <dbReference type="UniProtKB" id="Q9D394"/>
    </source>
</evidence>
<evidence type="ECO:0000255" key="3"/>
<evidence type="ECO:0000255" key="4">
    <source>
        <dbReference type="PROSITE-ProRule" id="PRU00178"/>
    </source>
</evidence>
<evidence type="ECO:0000269" key="5">
    <source>
    </source>
</evidence>
<evidence type="ECO:0000269" key="6">
    <source>
    </source>
</evidence>
<evidence type="ECO:0000269" key="7">
    <source>
    </source>
</evidence>
<evidence type="ECO:0000303" key="8">
    <source>
    </source>
</evidence>
<evidence type="ECO:0000305" key="9"/>
<evidence type="ECO:0000312" key="10">
    <source>
        <dbReference type="HGNC" id="HGNC:30285"/>
    </source>
</evidence>
<keyword id="KW-0025">Alternative splicing</keyword>
<keyword id="KW-0965">Cell junction</keyword>
<keyword id="KW-0966">Cell projection</keyword>
<keyword id="KW-0175">Coiled coil</keyword>
<keyword id="KW-0963">Cytoplasm</keyword>
<keyword id="KW-0217">Developmental protein</keyword>
<keyword id="KW-0221">Differentiation</keyword>
<keyword id="KW-0903">Direct protein sequencing</keyword>
<keyword id="KW-0458">Lysosome</keyword>
<keyword id="KW-0472">Membrane</keyword>
<keyword id="KW-0524">Neurogenesis</keyword>
<keyword id="KW-0553">Oncogene</keyword>
<keyword id="KW-0597">Phosphoprotein</keyword>
<keyword id="KW-1267">Proteomics identification</keyword>
<keyword id="KW-1185">Reference proteome</keyword>
<organism>
    <name type="scientific">Homo sapiens</name>
    <name type="common">Human</name>
    <dbReference type="NCBI Taxonomy" id="9606"/>
    <lineage>
        <taxon>Eukaryota</taxon>
        <taxon>Metazoa</taxon>
        <taxon>Chordata</taxon>
        <taxon>Craniata</taxon>
        <taxon>Vertebrata</taxon>
        <taxon>Euteleostomi</taxon>
        <taxon>Mammalia</taxon>
        <taxon>Eutheria</taxon>
        <taxon>Euarchontoglires</taxon>
        <taxon>Primates</taxon>
        <taxon>Haplorrhini</taxon>
        <taxon>Catarrhini</taxon>
        <taxon>Hominidae</taxon>
        <taxon>Homo</taxon>
    </lineage>
</organism>
<sequence length="469" mass="52965">MSALTPPTDMPTPTTDKITQAAMETIYLCKFRVSMDGEWLCLRELDDISLTPDPEPTHEDPNYLMANERMNLMNMAKLSIKGLIESALNLGRTLDSDYAPLQQFFVVMEHCLKHGLKAKKTFLGQNKSFWGPLELVEKLVPEAAEITASVKDLPGLKTPVGRGRAWLRLALMQKKLSEYMKALINKKELLSEFYEPNALMMEEEGAIIAGLLVGLNVIDANFCMKGEDLDSQVGVIDFSMYLKDGNSSKGTEGDGQITAILDQKNYVEELNRHLNATVNNLQAKVDALEKSNTKLTEELAVANNRIITLQEEMERVKEESSYILESNRKGPKQDRTAEGQALSEARKHLKEETQLRLDVEKELEMQISMRQEMELAMKMLEKDVCEKQDALVSLRQQLDDLRALKHELAFKLQSSDLGVKQKSELNSRLEEKTNQMAATIKQLEQSEKDLVKQAKTLNSAANKLIPKHH</sequence>
<feature type="chain" id="PRO_0000245833" description="Protein RUFY3">
    <location>
        <begin position="1"/>
        <end position="469"/>
    </location>
</feature>
<feature type="domain" description="RUN" evidence="4">
    <location>
        <begin position="95"/>
        <end position="227"/>
    </location>
</feature>
<feature type="coiled-coil region" evidence="3">
    <location>
        <begin position="271"/>
        <end position="362"/>
    </location>
</feature>
<feature type="coiled-coil region" evidence="3">
    <location>
        <begin position="422"/>
        <end position="463"/>
    </location>
</feature>
<feature type="modified residue" description="Phosphothreonine" evidence="1">
    <location>
        <position position="5"/>
    </location>
</feature>
<feature type="modified residue" description="Phosphothreonine" evidence="1">
    <location>
        <position position="12"/>
    </location>
</feature>
<feature type="modified residue" description="Phosphoserine" evidence="2">
    <location>
        <position position="34"/>
    </location>
</feature>
<feature type="modified residue" description="Phosphoserine" evidence="2">
    <location>
        <position position="49"/>
    </location>
</feature>
<feature type="modified residue" description="Phosphothreonine" evidence="2">
    <location>
        <position position="51"/>
    </location>
</feature>
<feature type="splice variant" id="VSP_041250" description="In isoform 2." evidence="8">
    <original>MSALTPPTDMPTPTTDKITQAAMETIYLCKFRVSMDGEWLCLRELDDISLTPDPEPTHED</original>
    <variation>MAETPPPPTAGAESCSEEPARGGEWRPEEPRRAPAGGTDREGEAGPPPASPAGQSEPDSPVAAPFFLLYPGDGGAGFGVRPPPQQQRSWRTPPSPGSPLPFLLLSYPSGGGGSSGSGKHH</variation>
    <location>
        <begin position="1"/>
        <end position="60"/>
    </location>
</feature>
<feature type="splice variant" id="VSP_041251" description="In isoform 4." evidence="8">
    <location>
        <begin position="1"/>
        <end position="53"/>
    </location>
</feature>
<feature type="splice variant" id="VSP_041252" description="In isoform 4." evidence="8">
    <original>PEPTH</original>
    <variation>MRDDT</variation>
    <location>
        <begin position="54"/>
        <end position="58"/>
    </location>
</feature>
<feature type="splice variant" id="VSP_041253" description="In isoform 3 and isoform 4." evidence="8">
    <original>SEKDLVKQAKTLNSAANKLIPKHH</original>
    <variation>RLRQAERSRQSAELDNRLFKQDFGDKINSLQLEVEELTRQRNQLELELKQEKERRLQNDRSIPGRGSQKSESKMDGKHKMQEENVKLKKPLEESHRLQPHPMDEQDQLLLSEKPQLCQLCQEDGSLTKNVCKNCSGTFCDACSTNELPLPSSIKLERVCNPCHKHLMKQYSTSPS</variation>
    <location>
        <begin position="446"/>
        <end position="469"/>
    </location>
</feature>
<feature type="splice variant" id="VSP_041254" description="In isoform 2." evidence="8">
    <original>S</original>
    <variation>R</variation>
    <location>
        <position position="446"/>
    </location>
</feature>
<feature type="splice variant" id="VSP_041255" description="In isoform 2." evidence="8">
    <location>
        <begin position="447"/>
        <end position="469"/>
    </location>
</feature>
<feature type="sequence conflict" description="In Ref. 5; AAF17208." evidence="9" ref="5">
    <original>K</original>
    <variation>R</variation>
    <location>
        <position position="151"/>
    </location>
</feature>
<feature type="sequence conflict" description="In Ref. 2; BAG63879." evidence="9" ref="2">
    <original>L</original>
    <variation>S</variation>
    <location>
        <position position="357"/>
    </location>
</feature>
<feature type="sequence conflict" description="In Ref. 2; BAG63879." evidence="9" ref="2">
    <original>L</original>
    <variation>S</variation>
    <location sequence="Q7L099-4">
        <position position="304"/>
    </location>
</feature>
<feature type="sequence conflict" description="In Ref. 2; BAG63879." evidence="9" ref="2">
    <original>R</original>
    <variation>G</variation>
    <location sequence="Q7L099-4">
        <position position="431"/>
    </location>
</feature>
<proteinExistence type="evidence at protein level"/>
<accession>Q7L099</accession>
<accession>B3KM25</accession>
<accession>B4DYW7</accession>
<accession>D9N163</accession>
<accession>O94948</accession>
<accession>Q9UI00</accession>
<reference key="1">
    <citation type="journal article" date="1998" name="DNA Res.">
        <title>Prediction of the coding sequences of unidentified human genes. XII. The complete sequences of 100 new cDNA clones from brain which code for large proteins in vitro.</title>
        <authorList>
            <person name="Nagase T."/>
            <person name="Ishikawa K."/>
            <person name="Suyama M."/>
            <person name="Kikuno R."/>
            <person name="Hirosawa M."/>
            <person name="Miyajima N."/>
            <person name="Tanaka A."/>
            <person name="Kotani H."/>
            <person name="Nomura N."/>
            <person name="Ohara O."/>
        </authorList>
    </citation>
    <scope>NUCLEOTIDE SEQUENCE [LARGE SCALE MRNA] (ISOFORM 1)</scope>
    <source>
        <tissue>Brain</tissue>
    </source>
</reference>
<reference key="2">
    <citation type="journal article" date="2004" name="Nat. Genet.">
        <title>Complete sequencing and characterization of 21,243 full-length human cDNAs.</title>
        <authorList>
            <person name="Ota T."/>
            <person name="Suzuki Y."/>
            <person name="Nishikawa T."/>
            <person name="Otsuki T."/>
            <person name="Sugiyama T."/>
            <person name="Irie R."/>
            <person name="Wakamatsu A."/>
            <person name="Hayashi K."/>
            <person name="Sato H."/>
            <person name="Nagai K."/>
            <person name="Kimura K."/>
            <person name="Makita H."/>
            <person name="Sekine M."/>
            <person name="Obayashi M."/>
            <person name="Nishi T."/>
            <person name="Shibahara T."/>
            <person name="Tanaka T."/>
            <person name="Ishii S."/>
            <person name="Yamamoto J."/>
            <person name="Saito K."/>
            <person name="Kawai Y."/>
            <person name="Isono Y."/>
            <person name="Nakamura Y."/>
            <person name="Nagahari K."/>
            <person name="Murakami K."/>
            <person name="Yasuda T."/>
            <person name="Iwayanagi T."/>
            <person name="Wagatsuma M."/>
            <person name="Shiratori A."/>
            <person name="Sudo H."/>
            <person name="Hosoiri T."/>
            <person name="Kaku Y."/>
            <person name="Kodaira H."/>
            <person name="Kondo H."/>
            <person name="Sugawara M."/>
            <person name="Takahashi M."/>
            <person name="Kanda K."/>
            <person name="Yokoi T."/>
            <person name="Furuya T."/>
            <person name="Kikkawa E."/>
            <person name="Omura Y."/>
            <person name="Abe K."/>
            <person name="Kamihara K."/>
            <person name="Katsuta N."/>
            <person name="Sato K."/>
            <person name="Tanikawa M."/>
            <person name="Yamazaki M."/>
            <person name="Ninomiya K."/>
            <person name="Ishibashi T."/>
            <person name="Yamashita H."/>
            <person name="Murakawa K."/>
            <person name="Fujimori K."/>
            <person name="Tanai H."/>
            <person name="Kimata M."/>
            <person name="Watanabe M."/>
            <person name="Hiraoka S."/>
            <person name="Chiba Y."/>
            <person name="Ishida S."/>
            <person name="Ono Y."/>
            <person name="Takiguchi S."/>
            <person name="Watanabe S."/>
            <person name="Yosida M."/>
            <person name="Hotuta T."/>
            <person name="Kusano J."/>
            <person name="Kanehori K."/>
            <person name="Takahashi-Fujii A."/>
            <person name="Hara H."/>
            <person name="Tanase T.-O."/>
            <person name="Nomura Y."/>
            <person name="Togiya S."/>
            <person name="Komai F."/>
            <person name="Hara R."/>
            <person name="Takeuchi K."/>
            <person name="Arita M."/>
            <person name="Imose N."/>
            <person name="Musashino K."/>
            <person name="Yuuki H."/>
            <person name="Oshima A."/>
            <person name="Sasaki N."/>
            <person name="Aotsuka S."/>
            <person name="Yoshikawa Y."/>
            <person name="Matsunawa H."/>
            <person name="Ichihara T."/>
            <person name="Shiohata N."/>
            <person name="Sano S."/>
            <person name="Moriya S."/>
            <person name="Momiyama H."/>
            <person name="Satoh N."/>
            <person name="Takami S."/>
            <person name="Terashima Y."/>
            <person name="Suzuki O."/>
            <person name="Nakagawa S."/>
            <person name="Senoh A."/>
            <person name="Mizoguchi H."/>
            <person name="Goto Y."/>
            <person name="Shimizu F."/>
            <person name="Wakebe H."/>
            <person name="Hishigaki H."/>
            <person name="Watanabe T."/>
            <person name="Sugiyama A."/>
            <person name="Takemoto M."/>
            <person name="Kawakami B."/>
            <person name="Yamazaki M."/>
            <person name="Watanabe K."/>
            <person name="Kumagai A."/>
            <person name="Itakura S."/>
            <person name="Fukuzumi Y."/>
            <person name="Fujimori Y."/>
            <person name="Komiyama M."/>
            <person name="Tashiro H."/>
            <person name="Tanigami A."/>
            <person name="Fujiwara T."/>
            <person name="Ono T."/>
            <person name="Yamada K."/>
            <person name="Fujii Y."/>
            <person name="Ozaki K."/>
            <person name="Hirao M."/>
            <person name="Ohmori Y."/>
            <person name="Kawabata A."/>
            <person name="Hikiji T."/>
            <person name="Kobatake N."/>
            <person name="Inagaki H."/>
            <person name="Ikema Y."/>
            <person name="Okamoto S."/>
            <person name="Okitani R."/>
            <person name="Kawakami T."/>
            <person name="Noguchi S."/>
            <person name="Itoh T."/>
            <person name="Shigeta K."/>
            <person name="Senba T."/>
            <person name="Matsumura K."/>
            <person name="Nakajima Y."/>
            <person name="Mizuno T."/>
            <person name="Morinaga M."/>
            <person name="Sasaki M."/>
            <person name="Togashi T."/>
            <person name="Oyama M."/>
            <person name="Hata H."/>
            <person name="Watanabe M."/>
            <person name="Komatsu T."/>
            <person name="Mizushima-Sugano J."/>
            <person name="Satoh T."/>
            <person name="Shirai Y."/>
            <person name="Takahashi Y."/>
            <person name="Nakagawa K."/>
            <person name="Okumura K."/>
            <person name="Nagase T."/>
            <person name="Nomura N."/>
            <person name="Kikuchi H."/>
            <person name="Masuho Y."/>
            <person name="Yamashita R."/>
            <person name="Nakai K."/>
            <person name="Yada T."/>
            <person name="Nakamura Y."/>
            <person name="Ohara O."/>
            <person name="Isogai T."/>
            <person name="Sugano S."/>
        </authorList>
    </citation>
    <scope>NUCLEOTIDE SEQUENCE [LARGE SCALE MRNA] (ISOFORMS 2 AND 4)</scope>
    <source>
        <tissue>Embryo</tissue>
        <tissue>Testis</tissue>
    </source>
</reference>
<reference key="3">
    <citation type="journal article" date="2005" name="Nature">
        <title>Generation and annotation of the DNA sequences of human chromosomes 2 and 4.</title>
        <authorList>
            <person name="Hillier L.W."/>
            <person name="Graves T.A."/>
            <person name="Fulton R.S."/>
            <person name="Fulton L.A."/>
            <person name="Pepin K.H."/>
            <person name="Minx P."/>
            <person name="Wagner-McPherson C."/>
            <person name="Layman D."/>
            <person name="Wylie K."/>
            <person name="Sekhon M."/>
            <person name="Becker M.C."/>
            <person name="Fewell G.A."/>
            <person name="Delehaunty K.D."/>
            <person name="Miner T.L."/>
            <person name="Nash W.E."/>
            <person name="Kremitzki C."/>
            <person name="Oddy L."/>
            <person name="Du H."/>
            <person name="Sun H."/>
            <person name="Bradshaw-Cordum H."/>
            <person name="Ali J."/>
            <person name="Carter J."/>
            <person name="Cordes M."/>
            <person name="Harris A."/>
            <person name="Isak A."/>
            <person name="van Brunt A."/>
            <person name="Nguyen C."/>
            <person name="Du F."/>
            <person name="Courtney L."/>
            <person name="Kalicki J."/>
            <person name="Ozersky P."/>
            <person name="Abbott S."/>
            <person name="Armstrong J."/>
            <person name="Belter E.A."/>
            <person name="Caruso L."/>
            <person name="Cedroni M."/>
            <person name="Cotton M."/>
            <person name="Davidson T."/>
            <person name="Desai A."/>
            <person name="Elliott G."/>
            <person name="Erb T."/>
            <person name="Fronick C."/>
            <person name="Gaige T."/>
            <person name="Haakenson W."/>
            <person name="Haglund K."/>
            <person name="Holmes A."/>
            <person name="Harkins R."/>
            <person name="Kim K."/>
            <person name="Kruchowski S.S."/>
            <person name="Strong C.M."/>
            <person name="Grewal N."/>
            <person name="Goyea E."/>
            <person name="Hou S."/>
            <person name="Levy A."/>
            <person name="Martinka S."/>
            <person name="Mead K."/>
            <person name="McLellan M.D."/>
            <person name="Meyer R."/>
            <person name="Randall-Maher J."/>
            <person name="Tomlinson C."/>
            <person name="Dauphin-Kohlberg S."/>
            <person name="Kozlowicz-Reilly A."/>
            <person name="Shah N."/>
            <person name="Swearengen-Shahid S."/>
            <person name="Snider J."/>
            <person name="Strong J.T."/>
            <person name="Thompson J."/>
            <person name="Yoakum M."/>
            <person name="Leonard S."/>
            <person name="Pearman C."/>
            <person name="Trani L."/>
            <person name="Radionenko M."/>
            <person name="Waligorski J.E."/>
            <person name="Wang C."/>
            <person name="Rock S.M."/>
            <person name="Tin-Wollam A.-M."/>
            <person name="Maupin R."/>
            <person name="Latreille P."/>
            <person name="Wendl M.C."/>
            <person name="Yang S.-P."/>
            <person name="Pohl C."/>
            <person name="Wallis J.W."/>
            <person name="Spieth J."/>
            <person name="Bieri T.A."/>
            <person name="Berkowicz N."/>
            <person name="Nelson J.O."/>
            <person name="Osborne J."/>
            <person name="Ding L."/>
            <person name="Meyer R."/>
            <person name="Sabo A."/>
            <person name="Shotland Y."/>
            <person name="Sinha P."/>
            <person name="Wohldmann P.E."/>
            <person name="Cook L.L."/>
            <person name="Hickenbotham M.T."/>
            <person name="Eldred J."/>
            <person name="Williams D."/>
            <person name="Jones T.A."/>
            <person name="She X."/>
            <person name="Ciccarelli F.D."/>
            <person name="Izaurralde E."/>
            <person name="Taylor J."/>
            <person name="Schmutz J."/>
            <person name="Myers R.M."/>
            <person name="Cox D.R."/>
            <person name="Huang X."/>
            <person name="McPherson J.D."/>
            <person name="Mardis E.R."/>
            <person name="Clifton S.W."/>
            <person name="Warren W.C."/>
            <person name="Chinwalla A.T."/>
            <person name="Eddy S.R."/>
            <person name="Marra M.A."/>
            <person name="Ovcharenko I."/>
            <person name="Furey T.S."/>
            <person name="Miller W."/>
            <person name="Eichler E.E."/>
            <person name="Bork P."/>
            <person name="Suyama M."/>
            <person name="Torrents D."/>
            <person name="Waterston R.H."/>
            <person name="Wilson R.K."/>
        </authorList>
    </citation>
    <scope>NUCLEOTIDE SEQUENCE [LARGE SCALE GENOMIC DNA]</scope>
</reference>
<reference key="4">
    <citation type="journal article" date="2004" name="Genome Res.">
        <title>The status, quality, and expansion of the NIH full-length cDNA project: the Mammalian Gene Collection (MGC).</title>
        <authorList>
            <consortium name="The MGC Project Team"/>
        </authorList>
    </citation>
    <scope>NUCLEOTIDE SEQUENCE [LARGE SCALE MRNA] (ISOFORM 1)</scope>
    <source>
        <tissue>Brain</tissue>
    </source>
</reference>
<reference key="5">
    <citation type="submission" date="1998-12" db="EMBL/GenBank/DDBJ databases">
        <title>A novel gene expressed in human adrenal gland.</title>
        <authorList>
            <person name="Peng Y."/>
            <person name="Gu Y."/>
            <person name="Gu J."/>
            <person name="Huang Q."/>
            <person name="Fu S."/>
            <person name="Wu T."/>
            <person name="Dong H."/>
            <person name="Jin W."/>
            <person name="Fu G."/>
            <person name="Han Z."/>
            <person name="Chen Z."/>
            <person name="Wang Y."/>
        </authorList>
    </citation>
    <scope>PARTIAL NUCLEOTIDE SEQUENCE [MRNA] (ISOFORM 2)</scope>
    <source>
        <tissue>Adrenal gland</tissue>
    </source>
</reference>
<reference key="6">
    <citation type="journal article" date="2010" name="Int. J. Biol. Sci.">
        <title>Rab5(Q79L) interacts with the carboxyl terminus of RUFY3.</title>
        <authorList>
            <person name="Yoshida H."/>
            <person name="Okumura N."/>
            <person name="Kitagishi Y."/>
            <person name="Shirafuji N."/>
            <person name="Matsuda S."/>
        </authorList>
    </citation>
    <scope>INTERACTION WITH RAS-RELATED PROTEINS</scope>
    <scope>SUBCELLULAR LOCATION</scope>
</reference>
<reference key="7">
    <citation type="journal article" date="2011" name="BMC Syst. Biol.">
        <title>Initial characterization of the human central proteome.</title>
        <authorList>
            <person name="Burkard T.R."/>
            <person name="Planyavsky M."/>
            <person name="Kaupe I."/>
            <person name="Breitwieser F.P."/>
            <person name="Buerckstuemmer T."/>
            <person name="Bennett K.L."/>
            <person name="Superti-Furga G."/>
            <person name="Colinge J."/>
        </authorList>
    </citation>
    <scope>IDENTIFICATION BY MASS SPECTROMETRY [LARGE SCALE ANALYSIS]</scope>
</reference>
<reference key="8">
    <citation type="journal article" date="2015" name="Cell Death Dis.">
        <title>PAK1 regulates RUFY3-mediated gastric cancer cell migration and invasion.</title>
        <authorList>
            <person name="Wang G."/>
            <person name="Zhang Q."/>
            <person name="Song Y."/>
            <person name="Wang X."/>
            <person name="Guo Q."/>
            <person name="Zhang J."/>
            <person name="Li J."/>
            <person name="Han Y."/>
            <person name="Miao Z."/>
            <person name="Li F."/>
        </authorList>
    </citation>
    <scope>INTERACTION WITH PAK1</scope>
    <scope>PHOSPHORYLATION</scope>
    <scope>SUBCELLULAR LOCATION</scope>
    <scope>TISSUE SPECIFICITY</scope>
</reference>
<reference key="9">
    <citation type="journal article" date="2022" name="Nat. Commun.">
        <title>RUFY3 and RUFY4 are ARL8 effectors that promote coupling of endolysosomes to dynein-dynactin.</title>
        <authorList>
            <person name="Keren-Kaplan T."/>
            <person name="Saric A."/>
            <person name="Ghosh S."/>
            <person name="Williamson C.D."/>
            <person name="Jia R."/>
            <person name="Li Y."/>
            <person name="Bonifacino J.S."/>
        </authorList>
    </citation>
    <scope>PARTIAL PROTEIN SEQUENCE (ISOFORM 3)</scope>
    <scope>FUNCTION</scope>
    <scope>INTERACTION WITH ARL8A; ARL8B; DCTN1; DYNC1LI1 AND DYNEIN INTERMEDIATE CHAIN</scope>
    <scope>SUBCELLULAR LOCATION</scope>
    <scope>IDENTIFICATION BY MASS SPECTROMETRY</scope>
</reference>
<comment type="function">
    <text evidence="1 2 6 7">ARL8 effector that promotes the coupling of endolysosomes to dynein-dynactin for retrograde transport along microtubules. Acts by binding both GTP-bound ARL8 and dynein-dynactin. In nonneuronal cells, promotes concentration of endolysosomes in the juxtanuclear area. In hippocampal neurons, drives retrograde transport of endolysosomes from the axon to the soma (PubMed:35314674). Plays a role in the generation of neuronal polarity formation and axon growth (By similarity). Implicated in the formation of a single axon by developing neurons (By similarity). May inhibit the formation of additional axons by inhibition of PI3K in minor neuronal processes (By similarity). Plays a role in the formation of F-actin-enriched protrusive structures at the cell periphery (PubMed:25766321). Plays a role in cytoskeletal organization by regulating the subcellular localization of FSCN1 and DBN1 at axonal growth cones (By similarity).</text>
</comment>
<comment type="subunit">
    <text evidence="1 2 5 6 7">Interacts with PAK1 (PubMed:25766321). Interacts (via C-terminus) with Ras-related Rab-5 proteins (PubMed:20376209). Interacts (via C-terminus) with Ras-related Rap-2 proteins (PubMed:20376209). Interacts with PIK3CA and PIK3R1 (By similarity). Interacts (via N-terminus) with FSCN1; this interaction induces neuron axon development (By similarity). Interacts with DBN1 (By similarity). Interacts (via the second coiled coil) with GTP-, but not GDP-bound ARL8A and ARL8B (PubMed:35314674). Interacts with dynactin/DCTN1 and the dynein intermediate chain DYNC1I1/2 (PubMed:35314674). Directly interacts with DYNC1LI1 (PubMed:35314674).</text>
</comment>
<comment type="interaction">
    <interactant intactId="EBI-722392">
        <id>Q7L099</id>
    </interactant>
    <interactant intactId="EBI-742038">
        <id>Q9P2A4</id>
        <label>ABI3</label>
    </interactant>
    <organismsDiffer>false</organismsDiffer>
    <experiments>3</experiments>
</comment>
<comment type="interaction">
    <interactant intactId="EBI-722392">
        <id>Q7L099</id>
    </interactant>
    <interactant intactId="EBI-11532021">
        <id>P20807-4</id>
        <label>CAPN3</label>
    </interactant>
    <organismsDiffer>false</organismsDiffer>
    <experiments>3</experiments>
</comment>
<comment type="interaction">
    <interactant intactId="EBI-722392">
        <id>Q7L099</id>
    </interactant>
    <interactant intactId="EBI-744685">
        <id>Q14088</id>
        <label>RAB33A</label>
    </interactant>
    <organismsDiffer>false</organismsDiffer>
    <experiments>5</experiments>
</comment>
<comment type="subcellular location">
    <subcellularLocation>
        <location evidence="6">Cytoplasm</location>
    </subcellularLocation>
    <subcellularLocation>
        <location evidence="5">Endomembrane system</location>
    </subcellularLocation>
    <subcellularLocation>
        <location evidence="6">Cell projection</location>
        <location evidence="6">Invadopodium</location>
    </subcellularLocation>
    <subcellularLocation>
        <location evidence="2">Perikaryon</location>
    </subcellularLocation>
    <subcellularLocation>
        <location evidence="2">Cell projection</location>
    </subcellularLocation>
    <subcellularLocation>
        <location evidence="2">Cell projection</location>
        <location evidence="2">Growth cone</location>
    </subcellularLocation>
    <subcellularLocation>
        <location evidence="2">Cell projection</location>
        <location evidence="2">Filopodium</location>
    </subcellularLocation>
    <subcellularLocation>
        <location evidence="2">Cell projection</location>
        <location evidence="2">Lamellipodium</location>
    </subcellularLocation>
    <subcellularLocation>
        <location evidence="7">Lysosome</location>
    </subcellularLocation>
    <text evidence="1 2 5 6 7">Colocalizes with PAK1, F-actin, myosins and integrins in invadopodia at the cell periphery (PubMed:25766321). Colocalizes with Ras-related Rab-5 proteins in cytoplasmic vesicles (PubMed:20376209). Accumulates in axon growth cones in a F-actin-dependent manner (By similarity). Colocalizes with FSCN1 and F-actin at filipodia and lamellipodia of axonal growth cones (By similarity). Colocalizes with DBN1 and F-actin at transitional domain of the axonal growth cone (By similarity). Recruitment to endolysosomes partially depends upon the presence of ARL8 (PubMed:35314674).</text>
</comment>
<comment type="alternative products">
    <event type="alternative splicing"/>
    <isoform>
        <id>Q7L099-1</id>
        <name>1</name>
        <sequence type="displayed"/>
    </isoform>
    <isoform>
        <id>Q7L099-2</id>
        <name>2</name>
        <sequence type="described" ref="VSP_041250 VSP_041254 VSP_041255"/>
    </isoform>
    <isoform>
        <id>Q7L099-3</id>
        <name>3</name>
        <sequence type="described" ref="VSP_041253"/>
    </isoform>
    <isoform>
        <id>Q7L099-4</id>
        <name>4</name>
        <sequence type="described" ref="VSP_041251 VSP_041252 VSP_041253"/>
    </isoform>
</comment>
<comment type="tissue specificity">
    <text evidence="6">Overexpressed in gastric cancer cells and tissues (at protein level) (PubMed:25766321).</text>
</comment>
<comment type="domain">
    <text evidence="7">The second coiled coil domain is involved in the interaction with GTP-bound ARL8B.</text>
</comment>
<comment type="PTM">
    <text evidence="1 6">Phosphorylated by PAK1 (PubMed:25766321). Isoform 1 is partially phosphorylated (By similarity).</text>
</comment>
<comment type="sequence caution" evidence="9">
    <conflict type="erroneous initiation">
        <sequence resource="EMBL-CDS" id="BAA74894"/>
    </conflict>
    <text>Extended N-terminus.</text>
</comment>
<comment type="sequence caution" evidence="9">
    <molecule>Isoform 2</molecule>
    <conflict type="frameshift">
        <sequence resource="EMBL-CDS" id="AAF17208"/>
    </conflict>
</comment>
<gene>
    <name evidence="10" type="primary">RUFY3</name>
    <name type="synonym">KIAA0871</name>
</gene>
<dbReference type="EMBL" id="AB020678">
    <property type="protein sequence ID" value="BAA74894.2"/>
    <property type="status" value="ALT_INIT"/>
    <property type="molecule type" value="mRNA"/>
</dbReference>
<dbReference type="EMBL" id="AK000911">
    <property type="protein sequence ID" value="BAG50837.1"/>
    <property type="molecule type" value="mRNA"/>
</dbReference>
<dbReference type="EMBL" id="AK302637">
    <property type="protein sequence ID" value="BAG63879.1"/>
    <property type="molecule type" value="mRNA"/>
</dbReference>
<dbReference type="EMBL" id="AC009570">
    <property type="status" value="NOT_ANNOTATED_CDS"/>
    <property type="molecule type" value="Genomic_DNA"/>
</dbReference>
<dbReference type="EMBL" id="BC051716">
    <property type="protein sequence ID" value="AAH51716.1"/>
    <property type="molecule type" value="mRNA"/>
</dbReference>
<dbReference type="EMBL" id="AF112221">
    <property type="protein sequence ID" value="AAF17208.1"/>
    <property type="status" value="ALT_FRAME"/>
    <property type="molecule type" value="mRNA"/>
</dbReference>
<dbReference type="CCDS" id="CCDS34001.1">
    <molecule id="Q7L099-3"/>
</dbReference>
<dbReference type="CCDS" id="CCDS3547.1">
    <molecule id="Q7L099-1"/>
</dbReference>
<dbReference type="CCDS" id="CCDS47068.1">
    <molecule id="Q7L099-2"/>
</dbReference>
<dbReference type="CCDS" id="CCDS75138.1">
    <molecule id="Q7L099-4"/>
</dbReference>
<dbReference type="RefSeq" id="NP_001032519.1">
    <molecule id="Q7L099-3"/>
    <property type="nucleotide sequence ID" value="NM_001037442.4"/>
</dbReference>
<dbReference type="RefSeq" id="NP_001124181.1">
    <molecule id="Q7L099-2"/>
    <property type="nucleotide sequence ID" value="NM_001130709.2"/>
</dbReference>
<dbReference type="RefSeq" id="NP_001278922.1">
    <molecule id="Q7L099-4"/>
    <property type="nucleotide sequence ID" value="NM_001291993.2"/>
</dbReference>
<dbReference type="RefSeq" id="NP_001278923.1">
    <property type="nucleotide sequence ID" value="NM_001291994.1"/>
</dbReference>
<dbReference type="RefSeq" id="NP_001332769.1">
    <property type="nucleotide sequence ID" value="NM_001345840.1"/>
</dbReference>
<dbReference type="RefSeq" id="NP_055776.1">
    <molecule id="Q7L099-1"/>
    <property type="nucleotide sequence ID" value="NM_014961.5"/>
</dbReference>
<dbReference type="SMR" id="Q7L099"/>
<dbReference type="BioGRID" id="116566">
    <property type="interactions" value="53"/>
</dbReference>
<dbReference type="CORUM" id="Q7L099"/>
<dbReference type="FunCoup" id="Q7L099">
    <property type="interactions" value="420"/>
</dbReference>
<dbReference type="IntAct" id="Q7L099">
    <property type="interactions" value="38"/>
</dbReference>
<dbReference type="MINT" id="Q7L099"/>
<dbReference type="STRING" id="9606.ENSP00000370394"/>
<dbReference type="GlyGen" id="Q7L099">
    <property type="glycosylation" value="1 site, 1 O-linked glycan (1 site)"/>
</dbReference>
<dbReference type="iPTMnet" id="Q7L099"/>
<dbReference type="PhosphoSitePlus" id="Q7L099"/>
<dbReference type="BioMuta" id="RUFY3"/>
<dbReference type="DMDM" id="74738521"/>
<dbReference type="jPOST" id="Q7L099"/>
<dbReference type="MassIVE" id="Q7L099"/>
<dbReference type="PaxDb" id="9606-ENSP00000370394"/>
<dbReference type="PeptideAtlas" id="Q7L099"/>
<dbReference type="ProteomicsDB" id="68727">
    <molecule id="Q7L099-1"/>
</dbReference>
<dbReference type="ProteomicsDB" id="68728">
    <molecule id="Q7L099-2"/>
</dbReference>
<dbReference type="ProteomicsDB" id="68729">
    <molecule id="Q7L099-3"/>
</dbReference>
<dbReference type="ProteomicsDB" id="68730">
    <molecule id="Q7L099-4"/>
</dbReference>
<dbReference type="Pumba" id="Q7L099"/>
<dbReference type="ABCD" id="Q7L099">
    <property type="antibodies" value="3 sequenced antibodies"/>
</dbReference>
<dbReference type="Antibodypedia" id="12878">
    <property type="antibodies" value="69 antibodies from 23 providers"/>
</dbReference>
<dbReference type="DNASU" id="22902"/>
<dbReference type="Ensembl" id="ENST00000226328.8">
    <molecule id="Q7L099-1"/>
    <property type="protein sequence ID" value="ENSP00000226328.4"/>
    <property type="gene ID" value="ENSG00000018189.13"/>
</dbReference>
<dbReference type="Ensembl" id="ENST00000381006.8">
    <molecule id="Q7L099-3"/>
    <property type="protein sequence ID" value="ENSP00000370394.3"/>
    <property type="gene ID" value="ENSG00000018189.13"/>
</dbReference>
<dbReference type="Ensembl" id="ENST00000417478.6">
    <molecule id="Q7L099-2"/>
    <property type="protein sequence ID" value="ENSP00000399771.2"/>
    <property type="gene ID" value="ENSG00000018189.13"/>
</dbReference>
<dbReference type="Ensembl" id="ENST00000502653.5">
    <molecule id="Q7L099-4"/>
    <property type="protein sequence ID" value="ENSP00000425400.1"/>
    <property type="gene ID" value="ENSG00000018189.13"/>
</dbReference>
<dbReference type="GeneID" id="22902"/>
<dbReference type="KEGG" id="hsa:22902"/>
<dbReference type="MANE-Select" id="ENST00000381006.8">
    <molecule id="Q7L099-3"/>
    <property type="protein sequence ID" value="ENSP00000370394.3"/>
    <property type="RefSeq nucleotide sequence ID" value="NM_001037442.4"/>
    <property type="RefSeq protein sequence ID" value="NP_001032519.1"/>
</dbReference>
<dbReference type="UCSC" id="uc003hfp.5">
    <molecule id="Q7L099-1"/>
    <property type="organism name" value="human"/>
</dbReference>
<dbReference type="AGR" id="HGNC:30285"/>
<dbReference type="CTD" id="22902"/>
<dbReference type="DisGeNET" id="22902"/>
<dbReference type="GeneCards" id="RUFY3"/>
<dbReference type="HGNC" id="HGNC:30285">
    <property type="gene designation" value="RUFY3"/>
</dbReference>
<dbReference type="HPA" id="ENSG00000018189">
    <property type="expression patterns" value="Tissue enhanced (retina)"/>
</dbReference>
<dbReference type="MIM" id="611194">
    <property type="type" value="gene"/>
</dbReference>
<dbReference type="neXtProt" id="NX_Q7L099"/>
<dbReference type="OpenTargets" id="ENSG00000018189"/>
<dbReference type="PharmGKB" id="PA142670961"/>
<dbReference type="VEuPathDB" id="HostDB:ENSG00000018189"/>
<dbReference type="eggNOG" id="KOG4381">
    <property type="taxonomic scope" value="Eukaryota"/>
</dbReference>
<dbReference type="GeneTree" id="ENSGT00940000156035"/>
<dbReference type="HOGENOM" id="CLU_014576_0_0_1"/>
<dbReference type="InParanoid" id="Q7L099"/>
<dbReference type="OMA" id="CDACSTH"/>
<dbReference type="OrthoDB" id="79871at2759"/>
<dbReference type="PAN-GO" id="Q7L099">
    <property type="GO annotations" value="5 GO annotations based on evolutionary models"/>
</dbReference>
<dbReference type="PhylomeDB" id="Q7L099"/>
<dbReference type="TreeFam" id="TF323904"/>
<dbReference type="PathwayCommons" id="Q7L099"/>
<dbReference type="SignaLink" id="Q7L099"/>
<dbReference type="BioGRID-ORCS" id="22902">
    <property type="hits" value="7 hits in 1154 CRISPR screens"/>
</dbReference>
<dbReference type="CD-CODE" id="DEE660B4">
    <property type="entry name" value="Stress granule"/>
</dbReference>
<dbReference type="CD-CODE" id="FB4E32DD">
    <property type="entry name" value="Presynaptic clusters and postsynaptic densities"/>
</dbReference>
<dbReference type="ChiTaRS" id="RUFY3">
    <property type="organism name" value="human"/>
</dbReference>
<dbReference type="GenomeRNAi" id="22902"/>
<dbReference type="Pharos" id="Q7L099">
    <property type="development level" value="Tbio"/>
</dbReference>
<dbReference type="PRO" id="PR:Q7L099"/>
<dbReference type="Proteomes" id="UP000005640">
    <property type="component" value="Chromosome 4"/>
</dbReference>
<dbReference type="RNAct" id="Q7L099">
    <property type="molecule type" value="protein"/>
</dbReference>
<dbReference type="Bgee" id="ENSG00000018189">
    <property type="expression patterns" value="Expressed in substantia nigra pars compacta and 203 other cell types or tissues"/>
</dbReference>
<dbReference type="ExpressionAtlas" id="Q7L099">
    <property type="expression patterns" value="baseline and differential"/>
</dbReference>
<dbReference type="GO" id="GO:0070161">
    <property type="term" value="C:anchoring junction"/>
    <property type="evidence" value="ECO:0007669"/>
    <property type="project" value="UniProtKB-KW"/>
</dbReference>
<dbReference type="GO" id="GO:0030424">
    <property type="term" value="C:axon"/>
    <property type="evidence" value="ECO:0000250"/>
    <property type="project" value="UniProtKB"/>
</dbReference>
<dbReference type="GO" id="GO:0005737">
    <property type="term" value="C:cytoplasm"/>
    <property type="evidence" value="ECO:0000314"/>
    <property type="project" value="UniProtKB"/>
</dbReference>
<dbReference type="GO" id="GO:0005829">
    <property type="term" value="C:cytosol"/>
    <property type="evidence" value="ECO:0000314"/>
    <property type="project" value="HPA"/>
</dbReference>
<dbReference type="GO" id="GO:0030425">
    <property type="term" value="C:dendrite"/>
    <property type="evidence" value="ECO:0000250"/>
    <property type="project" value="UniProtKB"/>
</dbReference>
<dbReference type="GO" id="GO:0036019">
    <property type="term" value="C:endolysosome"/>
    <property type="evidence" value="ECO:0000314"/>
    <property type="project" value="UniProtKB"/>
</dbReference>
<dbReference type="GO" id="GO:0030175">
    <property type="term" value="C:filopodium"/>
    <property type="evidence" value="ECO:0000250"/>
    <property type="project" value="HGNC-UCL"/>
</dbReference>
<dbReference type="GO" id="GO:0030426">
    <property type="term" value="C:growth cone"/>
    <property type="evidence" value="ECO:0000250"/>
    <property type="project" value="UniProtKB"/>
</dbReference>
<dbReference type="GO" id="GO:0030027">
    <property type="term" value="C:lamellipodium"/>
    <property type="evidence" value="ECO:0000250"/>
    <property type="project" value="UniProtKB"/>
</dbReference>
<dbReference type="GO" id="GO:0016020">
    <property type="term" value="C:membrane"/>
    <property type="evidence" value="ECO:0007669"/>
    <property type="project" value="UniProtKB-KW"/>
</dbReference>
<dbReference type="GO" id="GO:0043025">
    <property type="term" value="C:neuronal cell body"/>
    <property type="evidence" value="ECO:0000318"/>
    <property type="project" value="GO_Central"/>
</dbReference>
<dbReference type="GO" id="GO:0043204">
    <property type="term" value="C:perikaryon"/>
    <property type="evidence" value="ECO:0000250"/>
    <property type="project" value="UniProtKB"/>
</dbReference>
<dbReference type="GO" id="GO:0034452">
    <property type="term" value="F:dynactin binding"/>
    <property type="evidence" value="ECO:0000314"/>
    <property type="project" value="UniProtKB"/>
</dbReference>
<dbReference type="GO" id="GO:0007015">
    <property type="term" value="P:actin filament organization"/>
    <property type="evidence" value="ECO:0000250"/>
    <property type="project" value="UniProtKB"/>
</dbReference>
<dbReference type="GO" id="GO:0030154">
    <property type="term" value="P:cell differentiation"/>
    <property type="evidence" value="ECO:0007669"/>
    <property type="project" value="UniProtKB-KW"/>
</dbReference>
<dbReference type="GO" id="GO:0050771">
    <property type="term" value="P:negative regulation of axonogenesis"/>
    <property type="evidence" value="ECO:0000250"/>
    <property type="project" value="HGNC-UCL"/>
</dbReference>
<dbReference type="GO" id="GO:0007399">
    <property type="term" value="P:nervous system development"/>
    <property type="evidence" value="ECO:0007669"/>
    <property type="project" value="UniProtKB-KW"/>
</dbReference>
<dbReference type="GO" id="GO:0045773">
    <property type="term" value="P:positive regulation of axon extension"/>
    <property type="evidence" value="ECO:0000250"/>
    <property type="project" value="UniProtKB"/>
</dbReference>
<dbReference type="GO" id="GO:0030335">
    <property type="term" value="P:positive regulation of cell migration"/>
    <property type="evidence" value="ECO:0000314"/>
    <property type="project" value="UniProtKB"/>
</dbReference>
<dbReference type="GO" id="GO:0090316">
    <property type="term" value="P:positive regulation of intracellular protein transport"/>
    <property type="evidence" value="ECO:0000250"/>
    <property type="project" value="UniProtKB"/>
</dbReference>
<dbReference type="GO" id="GO:2001019">
    <property type="term" value="P:positive regulation of retrograde axon cargo transport"/>
    <property type="evidence" value="ECO:0000314"/>
    <property type="project" value="UniProtKB"/>
</dbReference>
<dbReference type="GO" id="GO:0050770">
    <property type="term" value="P:regulation of axonogenesis"/>
    <property type="evidence" value="ECO:0000318"/>
    <property type="project" value="GO_Central"/>
</dbReference>
<dbReference type="GO" id="GO:2000114">
    <property type="term" value="P:regulation of establishment of cell polarity"/>
    <property type="evidence" value="ECO:0000250"/>
    <property type="project" value="UniProtKB"/>
</dbReference>
<dbReference type="CDD" id="cd17696">
    <property type="entry name" value="RUN_RUFY3"/>
    <property type="match status" value="1"/>
</dbReference>
<dbReference type="FunFam" id="1.20.58.900:FF:000001">
    <property type="entry name" value="RUN and FYVE domain containing 2"/>
    <property type="match status" value="1"/>
</dbReference>
<dbReference type="FunFam" id="1.20.5.170:FF:000013">
    <property type="entry name" value="RUN and FYVE domain-containing 1"/>
    <property type="match status" value="1"/>
</dbReference>
<dbReference type="Gene3D" id="1.20.5.170">
    <property type="match status" value="1"/>
</dbReference>
<dbReference type="Gene3D" id="1.20.58.900">
    <property type="match status" value="1"/>
</dbReference>
<dbReference type="InterPro" id="IPR047335">
    <property type="entry name" value="RUFY1-3"/>
</dbReference>
<dbReference type="InterPro" id="IPR004012">
    <property type="entry name" value="Run_dom"/>
</dbReference>
<dbReference type="InterPro" id="IPR037213">
    <property type="entry name" value="Run_dom_sf"/>
</dbReference>
<dbReference type="InterPro" id="IPR047334">
    <property type="entry name" value="RUN_RUFY3"/>
</dbReference>
<dbReference type="PANTHER" id="PTHR45956:SF1">
    <property type="entry name" value="PROTEIN RUFY3"/>
    <property type="match status" value="1"/>
</dbReference>
<dbReference type="PANTHER" id="PTHR45956">
    <property type="entry name" value="RUN AND FYVE DOMAIN-CONTAINING PROTEIN 2-LIKE PROTEIN"/>
    <property type="match status" value="1"/>
</dbReference>
<dbReference type="Pfam" id="PF02759">
    <property type="entry name" value="RUN"/>
    <property type="match status" value="1"/>
</dbReference>
<dbReference type="SMART" id="SM00593">
    <property type="entry name" value="RUN"/>
    <property type="match status" value="1"/>
</dbReference>
<dbReference type="SUPFAM" id="SSF140741">
    <property type="entry name" value="RUN domain-like"/>
    <property type="match status" value="1"/>
</dbReference>
<dbReference type="PROSITE" id="PS50826">
    <property type="entry name" value="RUN"/>
    <property type="match status" value="1"/>
</dbReference>
<protein>
    <recommendedName>
        <fullName evidence="9">Protein RUFY3</fullName>
    </recommendedName>
    <alternativeName>
        <fullName evidence="10">RUN and FYVE domain-containing protein 3</fullName>
    </alternativeName>
    <alternativeName>
        <fullName evidence="2">Rap2-interacting protein x</fullName>
        <shortName evidence="2">RIPx</shortName>
    </alternativeName>
    <alternativeName>
        <fullName evidence="1">Single axon-regulated protein</fullName>
        <shortName evidence="1">Singar</shortName>
    </alternativeName>
</protein>
<name>RUFY3_HUMAN</name>